<reference key="1">
    <citation type="journal article" date="2011" name="Appl. Environ. Microbiol.">
        <title>Genomic potential of Marinobacter aquaeolei, a biogeochemical 'opportunitroph'.</title>
        <authorList>
            <person name="Singer E."/>
            <person name="Webb E.A."/>
            <person name="Nelson W.C."/>
            <person name="Heidelberg J.F."/>
            <person name="Ivanova N."/>
            <person name="Pati A."/>
            <person name="Edwards K.J."/>
        </authorList>
    </citation>
    <scope>NUCLEOTIDE SEQUENCE [LARGE SCALE GENOMIC DNA]</scope>
    <source>
        <strain>ATCC 700491 / DSM 11845 / VT8</strain>
    </source>
</reference>
<keyword id="KW-0963">Cytoplasm</keyword>
<keyword id="KW-0378">Hydrolase</keyword>
<keyword id="KW-0540">Nuclease</keyword>
<keyword id="KW-0690">Ribosome biogenesis</keyword>
<gene>
    <name type="ordered locus">Maqu_3763</name>
</gene>
<dbReference type="EC" id="3.1.-.-" evidence="1"/>
<dbReference type="EMBL" id="CP000514">
    <property type="protein sequence ID" value="ABM20832.1"/>
    <property type="molecule type" value="Genomic_DNA"/>
</dbReference>
<dbReference type="RefSeq" id="WP_011787166.1">
    <property type="nucleotide sequence ID" value="NC_008740.1"/>
</dbReference>
<dbReference type="SMR" id="A1U763"/>
<dbReference type="STRING" id="351348.Maqu_3763"/>
<dbReference type="KEGG" id="maq:Maqu_3763"/>
<dbReference type="eggNOG" id="COG0816">
    <property type="taxonomic scope" value="Bacteria"/>
</dbReference>
<dbReference type="HOGENOM" id="CLU_098240_3_0_6"/>
<dbReference type="OrthoDB" id="9796140at2"/>
<dbReference type="Proteomes" id="UP000000998">
    <property type="component" value="Chromosome"/>
</dbReference>
<dbReference type="GO" id="GO:0005829">
    <property type="term" value="C:cytosol"/>
    <property type="evidence" value="ECO:0007669"/>
    <property type="project" value="TreeGrafter"/>
</dbReference>
<dbReference type="GO" id="GO:0004518">
    <property type="term" value="F:nuclease activity"/>
    <property type="evidence" value="ECO:0007669"/>
    <property type="project" value="UniProtKB-KW"/>
</dbReference>
<dbReference type="GO" id="GO:0000967">
    <property type="term" value="P:rRNA 5'-end processing"/>
    <property type="evidence" value="ECO:0007669"/>
    <property type="project" value="UniProtKB-UniRule"/>
</dbReference>
<dbReference type="CDD" id="cd16964">
    <property type="entry name" value="YqgF"/>
    <property type="match status" value="1"/>
</dbReference>
<dbReference type="Gene3D" id="3.30.420.140">
    <property type="entry name" value="YqgF/RNase H-like domain"/>
    <property type="match status" value="1"/>
</dbReference>
<dbReference type="HAMAP" id="MF_00651">
    <property type="entry name" value="Nuclease_YqgF"/>
    <property type="match status" value="1"/>
</dbReference>
<dbReference type="InterPro" id="IPR012337">
    <property type="entry name" value="RNaseH-like_sf"/>
</dbReference>
<dbReference type="InterPro" id="IPR005227">
    <property type="entry name" value="YqgF"/>
</dbReference>
<dbReference type="InterPro" id="IPR006641">
    <property type="entry name" value="YqgF/RNaseH-like_dom"/>
</dbReference>
<dbReference type="InterPro" id="IPR037027">
    <property type="entry name" value="YqgF/RNaseH-like_dom_sf"/>
</dbReference>
<dbReference type="NCBIfam" id="TIGR00250">
    <property type="entry name" value="RNAse_H_YqgF"/>
    <property type="match status" value="1"/>
</dbReference>
<dbReference type="PANTHER" id="PTHR33317">
    <property type="entry name" value="POLYNUCLEOTIDYL TRANSFERASE, RIBONUCLEASE H-LIKE SUPERFAMILY PROTEIN"/>
    <property type="match status" value="1"/>
</dbReference>
<dbReference type="PANTHER" id="PTHR33317:SF4">
    <property type="entry name" value="POLYNUCLEOTIDYL TRANSFERASE, RIBONUCLEASE H-LIKE SUPERFAMILY PROTEIN"/>
    <property type="match status" value="1"/>
</dbReference>
<dbReference type="Pfam" id="PF03652">
    <property type="entry name" value="RuvX"/>
    <property type="match status" value="1"/>
</dbReference>
<dbReference type="SMART" id="SM00732">
    <property type="entry name" value="YqgFc"/>
    <property type="match status" value="1"/>
</dbReference>
<dbReference type="SUPFAM" id="SSF53098">
    <property type="entry name" value="Ribonuclease H-like"/>
    <property type="match status" value="1"/>
</dbReference>
<comment type="function">
    <text evidence="1">Could be a nuclease involved in processing of the 5'-end of pre-16S rRNA.</text>
</comment>
<comment type="subcellular location">
    <subcellularLocation>
        <location evidence="1">Cytoplasm</location>
    </subcellularLocation>
</comment>
<comment type="similarity">
    <text evidence="1">Belongs to the YqgF nuclease family.</text>
</comment>
<feature type="chain" id="PRO_1000061534" description="Putative pre-16S rRNA nuclease">
    <location>
        <begin position="1"/>
        <end position="143"/>
    </location>
</feature>
<protein>
    <recommendedName>
        <fullName evidence="1">Putative pre-16S rRNA nuclease</fullName>
        <ecNumber evidence="1">3.1.-.-</ecNumber>
    </recommendedName>
</protein>
<accession>A1U763</accession>
<evidence type="ECO:0000255" key="1">
    <source>
        <dbReference type="HAMAP-Rule" id="MF_00651"/>
    </source>
</evidence>
<name>YQGF_MARN8</name>
<sequence>MPDPGNRRLLAFDFGTRRIGVASGQEMLGTGQPLAMLPARDGIPDWQQIEALLADWQPDIVLVGLPLNMDDTENEMCARARKFGKRLHGRYHVTVEMVDERLTSYEAKGEVMAGGGSRDFGRHGVDDRAAVLILETWCREQAG</sequence>
<organism>
    <name type="scientific">Marinobacter nauticus (strain ATCC 700491 / DSM 11845 / VT8)</name>
    <name type="common">Marinobacter aquaeolei</name>
    <dbReference type="NCBI Taxonomy" id="351348"/>
    <lineage>
        <taxon>Bacteria</taxon>
        <taxon>Pseudomonadati</taxon>
        <taxon>Pseudomonadota</taxon>
        <taxon>Gammaproteobacteria</taxon>
        <taxon>Pseudomonadales</taxon>
        <taxon>Marinobacteraceae</taxon>
        <taxon>Marinobacter</taxon>
    </lineage>
</organism>
<proteinExistence type="inferred from homology"/>